<sequence>MTTVTPMMAQYLEIKEAYADALLFYRMGDFYEMFFDDAVAAAEALDIALTKRGKHEGEDIPMCGVPVHAAEGYLLTLIRKGFRVAVCEQMESPAEAKKRGSKSVVRRDVVRLVTPGTLTEDALLEARRHNFLVAYAEVRSGAALAWADISTGDFHVMPVTRPRLSPELARLAPSELLVVDEPVFQQLRPLADDHRIPLTPLGKASFDSMAAEKRLCELYKVGSLEGFGTFARAELSAMGALIDYLDITQKGKLPLLQPPVQEAEDRVMQIDAATRRNLELTRSLSGERGGSLLSVIDRTVTPGGARLLEQRLGSPSRNLDVIHARLSALDFCIDHSTLAADLRAALRKTPDLDRALSRLALDRGGPRDLAAIRNGLGQAEAIAALCDGLELPGLIAGACADLNGFDELLGLLDTALVAEPPLLARDGGFIAPGYDSDLDEARELRDKGRGVIAGMQQKYAEHTGIASLKIKHNNVLGYFIETTATHAAKMLNPPLSETYIHRQTTANQVRFTTVELSELETRILNAGNHALEIEKRLYSSLSGAVLEQAARLNIAARGLAELDLATALADLARAENWCRPSVDPSRAFAIEGGRHPVVEHALRRQGGDPFVANDCDLSADKGAAIRLLTGPNMAGKSTYLRQNALITLLAQIGSYVPADSAHIGVVSQLFSRVGASDDLARGRSTFMVEMVETAAILNQADDHALVILDEIGRGTATYDGLSIAWATLEHLHATNRCRALFATHYHELTALAATLDGVENLTVAVKEWEGEVIFLHEVRKGAADRSYGVQVAQLAGLPPSVVARARVVLDQLEKSEREGGKQKALIDDLPLFSAAPPLPPPAPKTSPADAMLKEIHPDELTPRQALEMLYKLKEAAR</sequence>
<name>MUTS_RUEPO</name>
<comment type="function">
    <text evidence="1">This protein is involved in the repair of mismatches in DNA. It is possible that it carries out the mismatch recognition step. This protein has a weak ATPase activity.</text>
</comment>
<comment type="similarity">
    <text evidence="1">Belongs to the DNA mismatch repair MutS family.</text>
</comment>
<accession>Q5LWH0</accession>
<protein>
    <recommendedName>
        <fullName evidence="1">DNA mismatch repair protein MutS</fullName>
    </recommendedName>
</protein>
<keyword id="KW-0067">ATP-binding</keyword>
<keyword id="KW-0227">DNA damage</keyword>
<keyword id="KW-0234">DNA repair</keyword>
<keyword id="KW-0238">DNA-binding</keyword>
<keyword id="KW-0547">Nucleotide-binding</keyword>
<keyword id="KW-1185">Reference proteome</keyword>
<dbReference type="EMBL" id="CP000031">
    <property type="protein sequence ID" value="AAV93342.1"/>
    <property type="molecule type" value="Genomic_DNA"/>
</dbReference>
<dbReference type="SMR" id="Q5LWH0"/>
<dbReference type="STRING" id="246200.SPO0011"/>
<dbReference type="PaxDb" id="246200-SPO0011"/>
<dbReference type="KEGG" id="sil:SPO0011"/>
<dbReference type="eggNOG" id="COG0249">
    <property type="taxonomic scope" value="Bacteria"/>
</dbReference>
<dbReference type="HOGENOM" id="CLU_002472_4_0_5"/>
<dbReference type="Proteomes" id="UP000001023">
    <property type="component" value="Chromosome"/>
</dbReference>
<dbReference type="GO" id="GO:0005829">
    <property type="term" value="C:cytosol"/>
    <property type="evidence" value="ECO:0007669"/>
    <property type="project" value="TreeGrafter"/>
</dbReference>
<dbReference type="GO" id="GO:0005524">
    <property type="term" value="F:ATP binding"/>
    <property type="evidence" value="ECO:0007669"/>
    <property type="project" value="UniProtKB-UniRule"/>
</dbReference>
<dbReference type="GO" id="GO:0140664">
    <property type="term" value="F:ATP-dependent DNA damage sensor activity"/>
    <property type="evidence" value="ECO:0007669"/>
    <property type="project" value="InterPro"/>
</dbReference>
<dbReference type="GO" id="GO:0003684">
    <property type="term" value="F:damaged DNA binding"/>
    <property type="evidence" value="ECO:0007669"/>
    <property type="project" value="UniProtKB-UniRule"/>
</dbReference>
<dbReference type="GO" id="GO:0030983">
    <property type="term" value="F:mismatched DNA binding"/>
    <property type="evidence" value="ECO:0007669"/>
    <property type="project" value="InterPro"/>
</dbReference>
<dbReference type="GO" id="GO:0006298">
    <property type="term" value="P:mismatch repair"/>
    <property type="evidence" value="ECO:0007669"/>
    <property type="project" value="UniProtKB-UniRule"/>
</dbReference>
<dbReference type="CDD" id="cd03284">
    <property type="entry name" value="ABC_MutS1"/>
    <property type="match status" value="1"/>
</dbReference>
<dbReference type="FunFam" id="3.40.1170.10:FF:000001">
    <property type="entry name" value="DNA mismatch repair protein MutS"/>
    <property type="match status" value="1"/>
</dbReference>
<dbReference type="FunFam" id="3.40.50.300:FF:000870">
    <property type="entry name" value="MutS protein homolog 4"/>
    <property type="match status" value="1"/>
</dbReference>
<dbReference type="Gene3D" id="1.10.1420.10">
    <property type="match status" value="2"/>
</dbReference>
<dbReference type="Gene3D" id="6.10.140.430">
    <property type="match status" value="1"/>
</dbReference>
<dbReference type="Gene3D" id="3.40.1170.10">
    <property type="entry name" value="DNA repair protein MutS, domain I"/>
    <property type="match status" value="1"/>
</dbReference>
<dbReference type="Gene3D" id="3.30.420.110">
    <property type="entry name" value="MutS, connector domain"/>
    <property type="match status" value="1"/>
</dbReference>
<dbReference type="Gene3D" id="3.40.50.300">
    <property type="entry name" value="P-loop containing nucleotide triphosphate hydrolases"/>
    <property type="match status" value="1"/>
</dbReference>
<dbReference type="HAMAP" id="MF_00096">
    <property type="entry name" value="MutS"/>
    <property type="match status" value="1"/>
</dbReference>
<dbReference type="InterPro" id="IPR005748">
    <property type="entry name" value="DNA_mismatch_repair_MutS"/>
</dbReference>
<dbReference type="InterPro" id="IPR007695">
    <property type="entry name" value="DNA_mismatch_repair_MutS-lik_N"/>
</dbReference>
<dbReference type="InterPro" id="IPR017261">
    <property type="entry name" value="DNA_mismatch_repair_MutS/MSH"/>
</dbReference>
<dbReference type="InterPro" id="IPR000432">
    <property type="entry name" value="DNA_mismatch_repair_MutS_C"/>
</dbReference>
<dbReference type="InterPro" id="IPR007861">
    <property type="entry name" value="DNA_mismatch_repair_MutS_clamp"/>
</dbReference>
<dbReference type="InterPro" id="IPR007696">
    <property type="entry name" value="DNA_mismatch_repair_MutS_core"/>
</dbReference>
<dbReference type="InterPro" id="IPR016151">
    <property type="entry name" value="DNA_mismatch_repair_MutS_N"/>
</dbReference>
<dbReference type="InterPro" id="IPR036187">
    <property type="entry name" value="DNA_mismatch_repair_MutS_sf"/>
</dbReference>
<dbReference type="InterPro" id="IPR007860">
    <property type="entry name" value="DNA_mmatch_repair_MutS_con_dom"/>
</dbReference>
<dbReference type="InterPro" id="IPR045076">
    <property type="entry name" value="MutS"/>
</dbReference>
<dbReference type="InterPro" id="IPR036678">
    <property type="entry name" value="MutS_con_dom_sf"/>
</dbReference>
<dbReference type="InterPro" id="IPR027417">
    <property type="entry name" value="P-loop_NTPase"/>
</dbReference>
<dbReference type="NCBIfam" id="TIGR01070">
    <property type="entry name" value="mutS1"/>
    <property type="match status" value="1"/>
</dbReference>
<dbReference type="NCBIfam" id="NF003810">
    <property type="entry name" value="PRK05399.1"/>
    <property type="match status" value="1"/>
</dbReference>
<dbReference type="PANTHER" id="PTHR11361:SF34">
    <property type="entry name" value="DNA MISMATCH REPAIR PROTEIN MSH1, MITOCHONDRIAL"/>
    <property type="match status" value="1"/>
</dbReference>
<dbReference type="PANTHER" id="PTHR11361">
    <property type="entry name" value="DNA MISMATCH REPAIR PROTEIN MUTS FAMILY MEMBER"/>
    <property type="match status" value="1"/>
</dbReference>
<dbReference type="Pfam" id="PF01624">
    <property type="entry name" value="MutS_I"/>
    <property type="match status" value="1"/>
</dbReference>
<dbReference type="Pfam" id="PF05188">
    <property type="entry name" value="MutS_II"/>
    <property type="match status" value="1"/>
</dbReference>
<dbReference type="Pfam" id="PF05192">
    <property type="entry name" value="MutS_III"/>
    <property type="match status" value="1"/>
</dbReference>
<dbReference type="Pfam" id="PF05190">
    <property type="entry name" value="MutS_IV"/>
    <property type="match status" value="1"/>
</dbReference>
<dbReference type="Pfam" id="PF00488">
    <property type="entry name" value="MutS_V"/>
    <property type="match status" value="1"/>
</dbReference>
<dbReference type="PIRSF" id="PIRSF037677">
    <property type="entry name" value="DNA_mis_repair_Msh6"/>
    <property type="match status" value="1"/>
</dbReference>
<dbReference type="SMART" id="SM00534">
    <property type="entry name" value="MUTSac"/>
    <property type="match status" value="1"/>
</dbReference>
<dbReference type="SMART" id="SM00533">
    <property type="entry name" value="MUTSd"/>
    <property type="match status" value="1"/>
</dbReference>
<dbReference type="SUPFAM" id="SSF55271">
    <property type="entry name" value="DNA repair protein MutS, domain I"/>
    <property type="match status" value="1"/>
</dbReference>
<dbReference type="SUPFAM" id="SSF53150">
    <property type="entry name" value="DNA repair protein MutS, domain II"/>
    <property type="match status" value="1"/>
</dbReference>
<dbReference type="SUPFAM" id="SSF48334">
    <property type="entry name" value="DNA repair protein MutS, domain III"/>
    <property type="match status" value="1"/>
</dbReference>
<dbReference type="SUPFAM" id="SSF52540">
    <property type="entry name" value="P-loop containing nucleoside triphosphate hydrolases"/>
    <property type="match status" value="1"/>
</dbReference>
<dbReference type="PROSITE" id="PS00486">
    <property type="entry name" value="DNA_MISMATCH_REPAIR_2"/>
    <property type="match status" value="1"/>
</dbReference>
<evidence type="ECO:0000255" key="1">
    <source>
        <dbReference type="HAMAP-Rule" id="MF_00096"/>
    </source>
</evidence>
<feature type="chain" id="PRO_0000224406" description="DNA mismatch repair protein MutS">
    <location>
        <begin position="1"/>
        <end position="877"/>
    </location>
</feature>
<feature type="binding site" evidence="1">
    <location>
        <begin position="630"/>
        <end position="637"/>
    </location>
    <ligand>
        <name>ATP</name>
        <dbReference type="ChEBI" id="CHEBI:30616"/>
    </ligand>
</feature>
<proteinExistence type="inferred from homology"/>
<reference key="1">
    <citation type="journal article" date="2004" name="Nature">
        <title>Genome sequence of Silicibacter pomeroyi reveals adaptations to the marine environment.</title>
        <authorList>
            <person name="Moran M.A."/>
            <person name="Buchan A."/>
            <person name="Gonzalez J.M."/>
            <person name="Heidelberg J.F."/>
            <person name="Whitman W.B."/>
            <person name="Kiene R.P."/>
            <person name="Henriksen J.R."/>
            <person name="King G.M."/>
            <person name="Belas R."/>
            <person name="Fuqua C."/>
            <person name="Brinkac L.M."/>
            <person name="Lewis M."/>
            <person name="Johri S."/>
            <person name="Weaver B."/>
            <person name="Pai G."/>
            <person name="Eisen J.A."/>
            <person name="Rahe E."/>
            <person name="Sheldon W.M."/>
            <person name="Ye W."/>
            <person name="Miller T.R."/>
            <person name="Carlton J."/>
            <person name="Rasko D.A."/>
            <person name="Paulsen I.T."/>
            <person name="Ren Q."/>
            <person name="Daugherty S.C."/>
            <person name="DeBoy R.T."/>
            <person name="Dodson R.J."/>
            <person name="Durkin A.S."/>
            <person name="Madupu R."/>
            <person name="Nelson W.C."/>
            <person name="Sullivan S.A."/>
            <person name="Rosovitz M.J."/>
            <person name="Haft D.H."/>
            <person name="Selengut J."/>
            <person name="Ward N."/>
        </authorList>
    </citation>
    <scope>NUCLEOTIDE SEQUENCE [LARGE SCALE GENOMIC DNA]</scope>
    <source>
        <strain>ATCC 700808 / DSM 15171 / DSS-3</strain>
    </source>
</reference>
<reference key="2">
    <citation type="journal article" date="2014" name="Stand. Genomic Sci.">
        <title>An updated genome annotation for the model marine bacterium Ruegeria pomeroyi DSS-3.</title>
        <authorList>
            <person name="Rivers A.R."/>
            <person name="Smith C.B."/>
            <person name="Moran M.A."/>
        </authorList>
    </citation>
    <scope>GENOME REANNOTATION</scope>
    <source>
        <strain>ATCC 700808 / DSM 15171 / DSS-3</strain>
    </source>
</reference>
<gene>
    <name evidence="1" type="primary">mutS</name>
    <name type="ordered locus">SPO0011</name>
</gene>
<organism>
    <name type="scientific">Ruegeria pomeroyi (strain ATCC 700808 / DSM 15171 / DSS-3)</name>
    <name type="common">Silicibacter pomeroyi</name>
    <dbReference type="NCBI Taxonomy" id="246200"/>
    <lineage>
        <taxon>Bacteria</taxon>
        <taxon>Pseudomonadati</taxon>
        <taxon>Pseudomonadota</taxon>
        <taxon>Alphaproteobacteria</taxon>
        <taxon>Rhodobacterales</taxon>
        <taxon>Roseobacteraceae</taxon>
        <taxon>Ruegeria</taxon>
    </lineage>
</organism>